<organismHost>
    <name type="scientific">Homo sapiens</name>
    <name type="common">Human</name>
    <dbReference type="NCBI Taxonomy" id="9606"/>
</organismHost>
<keyword id="KW-0002">3D-structure</keyword>
<keyword id="KW-1073">Activation of host caspases by virus</keyword>
<keyword id="KW-0014">AIDS</keyword>
<keyword id="KW-0064">Aspartyl protease</keyword>
<keyword id="KW-0167">Capsid protein</keyword>
<keyword id="KW-0229">DNA integration</keyword>
<keyword id="KW-0233">DNA recombination</keyword>
<keyword id="KW-0238">DNA-binding</keyword>
<keyword id="KW-0239">DNA-directed DNA polymerase</keyword>
<keyword id="KW-0255">Endonuclease</keyword>
<keyword id="KW-1262">Eukaryotic host gene expression shutoff by virus</keyword>
<keyword id="KW-1193">Eukaryotic host translation shutoff by virus</keyword>
<keyword id="KW-1032">Host cell membrane</keyword>
<keyword id="KW-1035">Host cytoplasm</keyword>
<keyword id="KW-1039">Host endosome</keyword>
<keyword id="KW-1190">Host gene expression shutoff by virus</keyword>
<keyword id="KW-1043">Host membrane</keyword>
<keyword id="KW-1048">Host nucleus</keyword>
<keyword id="KW-0945">Host-virus interaction</keyword>
<keyword id="KW-0378">Hydrolase</keyword>
<keyword id="KW-0446">Lipid-binding</keyword>
<keyword id="KW-0449">Lipoprotein</keyword>
<keyword id="KW-0460">Magnesium</keyword>
<keyword id="KW-0472">Membrane</keyword>
<keyword id="KW-0479">Metal-binding</keyword>
<keyword id="KW-1119">Modulation of host cell apoptosis by virus</keyword>
<keyword id="KW-0511">Multifunctional enzyme</keyword>
<keyword id="KW-0519">Myristate</keyword>
<keyword id="KW-0540">Nuclease</keyword>
<keyword id="KW-0548">Nucleotidyltransferase</keyword>
<keyword id="KW-0597">Phosphoprotein</keyword>
<keyword id="KW-0645">Protease</keyword>
<keyword id="KW-0677">Repeat</keyword>
<keyword id="KW-0688">Ribosomal frameshifting</keyword>
<keyword id="KW-0694">RNA-binding</keyword>
<keyword id="KW-0695">RNA-directed DNA polymerase</keyword>
<keyword id="KW-0808">Transferase</keyword>
<keyword id="KW-1179">Viral genome integration</keyword>
<keyword id="KW-0543">Viral nucleoprotein</keyword>
<keyword id="KW-1163">Viral penetration into host nucleus</keyword>
<keyword id="KW-1188">Viral release from host cell</keyword>
<keyword id="KW-0946">Virion</keyword>
<keyword id="KW-0917">Virion maturation</keyword>
<keyword id="KW-1160">Virus entry into host cell</keyword>
<keyword id="KW-0862">Zinc</keyword>
<keyword id="KW-0863">Zinc-finger</keyword>
<gene>
    <name type="primary">gag-pol</name>
</gene>
<protein>
    <recommendedName>
        <fullName>Gag-Pol polyprotein</fullName>
    </recommendedName>
    <alternativeName>
        <fullName>Pr160Gag-Pol</fullName>
    </alternativeName>
    <component>
        <recommendedName>
            <fullName>Matrix protein p17</fullName>
            <shortName>MA</shortName>
        </recommendedName>
    </component>
    <component>
        <recommendedName>
            <fullName>Capsid protein p24</fullName>
            <shortName>CA</shortName>
        </recommendedName>
    </component>
    <component>
        <recommendedName>
            <fullName evidence="7">Spacer peptide 1</fullName>
            <shortName>SP1</shortName>
        </recommendedName>
        <alternativeName>
            <fullName>p2</fullName>
        </alternativeName>
    </component>
    <component>
        <recommendedName>
            <fullName>Nucleocapsid protein p7</fullName>
            <shortName>NC</shortName>
        </recommendedName>
    </component>
    <component>
        <recommendedName>
            <fullName>Transframe peptide</fullName>
            <shortName>TF</shortName>
        </recommendedName>
    </component>
    <component>
        <recommendedName>
            <fullName>p6-pol</fullName>
            <shortName>p6*</shortName>
        </recommendedName>
    </component>
    <component>
        <recommendedName>
            <fullName>Protease</fullName>
            <ecNumber>3.4.23.16</ecNumber>
        </recommendedName>
        <alternativeName>
            <fullName>PR</fullName>
        </alternativeName>
        <alternativeName>
            <fullName>Retropepsin</fullName>
        </alternativeName>
    </component>
    <component>
        <recommendedName>
            <fullName>Reverse transcriptase/ribonuclease H</fullName>
            <ecNumber>2.7.7.49</ecNumber>
            <ecNumber>2.7.7.7</ecNumber>
            <ecNumber>3.1.26.13</ecNumber>
        </recommendedName>
        <alternativeName>
            <fullName>Exoribonuclease H</fullName>
            <ecNumber>3.1.13.2</ecNumber>
        </alternativeName>
        <alternativeName>
            <fullName>p66 RT</fullName>
        </alternativeName>
    </component>
    <component>
        <recommendedName>
            <fullName>p51 RT</fullName>
        </recommendedName>
    </component>
    <component>
        <recommendedName>
            <fullName>p15</fullName>
        </recommendedName>
    </component>
    <component>
        <recommendedName>
            <fullName>Integrase</fullName>
            <shortName>IN</shortName>
            <ecNumber evidence="5">2.7.7.-</ecNumber>
            <ecNumber evidence="5">3.1.-.-</ecNumber>
        </recommendedName>
    </component>
</protein>
<reference key="1">
    <citation type="journal article" date="1985" name="Nature">
        <title>Complete nucleotide sequence of the AIDS virus, HTLV-III.</title>
        <authorList>
            <person name="Ratner L."/>
            <person name="Haseltine W.A."/>
            <person name="Patarca R."/>
            <person name="Livak K.J."/>
            <person name="Starcich B.R."/>
            <person name="Josephs S.F."/>
            <person name="Doran E.R."/>
            <person name="Rafalski J.A."/>
            <person name="Whitehorn E.A."/>
            <person name="Baumeister K."/>
            <person name="Ivanoff L."/>
            <person name="Petteway S.R. Jr."/>
            <person name="Pearson M.L."/>
            <person name="Lautenberger J.A."/>
            <person name="Papas T.S."/>
            <person name="Ghrayeb J."/>
            <person name="Chang N.T."/>
            <person name="Gallo R.C."/>
            <person name="Wong-Staal F."/>
        </authorList>
    </citation>
    <scope>NUCLEOTIDE SEQUENCE [GENOMIC RNA]</scope>
</reference>
<reference key="2">
    <citation type="journal article" date="1996" name="Curr. Top. Microbiol. Immunol.">
        <title>Proteolytic processing and particle maturation.</title>
        <authorList>
            <person name="Vogt V.M."/>
        </authorList>
    </citation>
    <scope>REVIEW</scope>
</reference>
<reference key="3">
    <citation type="journal article" date="1999" name="J. Mol. Biol.">
        <title>Structural biology of HIV.</title>
        <authorList>
            <person name="Turner B.G."/>
            <person name="Summers M.F."/>
        </authorList>
    </citation>
    <scope>REVIEW</scope>
</reference>
<reference key="4">
    <citation type="journal article" date="2001" name="Annu. Rev. Genet.">
        <title>Mechanisms of retroviral recombination.</title>
        <authorList>
            <person name="Negroni M."/>
            <person name="Buc H."/>
        </authorList>
    </citation>
    <scope>REVIEW</scope>
</reference>
<reference key="5">
    <citation type="journal article" date="2002" name="Genome Biol.">
        <title>Retroviral proteases.</title>
        <authorList>
            <person name="Dunn B.M."/>
            <person name="Goodenow M.M."/>
            <person name="Gustchina A."/>
            <person name="Wlodawer A."/>
        </authorList>
    </citation>
    <scope>REVIEW</scope>
</reference>
<reference key="6">
    <citation type="journal article" date="2003" name="Biochim. Biophys. Acta">
        <title>Role of HIV-1 Gag domains in viral assembly.</title>
        <authorList>
            <person name="Scarlata S."/>
            <person name="Carter C."/>
        </authorList>
    </citation>
    <scope>REVIEW</scope>
</reference>
<reference key="7">
    <citation type="journal article" date="1995" name="J. Med. Chem.">
        <title>Structure-based design of novel HIV protease inhibitors: carboxamide-containing 4-hydroxycoumarins and 4-hydroxy-2-pyrones as potent nonpeptidic inhibitors.</title>
        <authorList>
            <person name="Thaisrivongs S."/>
            <person name="Watenpaugh K.D."/>
            <person name="Howe W.J."/>
            <person name="Tomich P.K."/>
            <person name="Dolak L.A."/>
            <person name="Chong K.-T."/>
            <person name="Tomich C.C."/>
            <person name="Tomasselli A.G."/>
            <person name="Turner S.R."/>
            <person name="Strohbach J.W."/>
            <person name="Mulichak A.M."/>
            <person name="Janakiraman M.N."/>
            <person name="Moon J.B."/>
            <person name="Lynn J.C."/>
            <person name="Horng M.-M."/>
            <person name="Hinshaw R.R."/>
            <person name="Curry K.A."/>
            <person name="Rothrock D.J."/>
        </authorList>
    </citation>
    <scope>X-RAY CRYSTALLOGRAPHY (2.22 ANGSTROMS) OF 501-599</scope>
</reference>
<reference key="8">
    <citation type="journal article" date="1996" name="Biochemistry">
        <title>Human immunodeficiency virus protease ligand specificity conferred by residues outside of the active site cavity.</title>
        <authorList>
            <person name="Hoog S.S."/>
            <person name="Towler E.M."/>
            <person name="Zhao B."/>
            <person name="Doyle M.L."/>
            <person name="Debouck C."/>
            <person name="Abdel-Meguid S.S."/>
        </authorList>
    </citation>
    <scope>X-RAY CRYSTALLOGRAPHY (2.3 ANGSTROMS) OF 501-599 IN COMPLEX WITH THE INHIBITOR SB203386</scope>
</reference>
<reference key="9">
    <citation type="journal article" date="1997" name="Biochemistry">
        <title>Identification of a loop outside the active site cavity of the human immunodeficiency virus proteases which confers inhibitor specificity.</title>
        <authorList>
            <person name="Towler E.M."/>
            <person name="Thompson S.K."/>
            <person name="Tomaszek T."/>
            <person name="Debouck C."/>
        </authorList>
    </citation>
    <scope>X-RAY CRYSTALLOGRAPHY (2.8 ANGSTROMS) OF 501-599</scope>
</reference>
<reference key="10">
    <citation type="journal article" date="1997" name="Nat. Struct. Biol.">
        <title>Solution structure of the N-terminal zinc binding domain of HIV-1 integrase.</title>
        <authorList>
            <person name="Cai M."/>
            <person name="Zheng R."/>
            <person name="Caffrey M."/>
            <person name="Craigie R."/>
            <person name="Clore G.M."/>
            <person name="Gronenborn A.M."/>
        </authorList>
    </citation>
    <scope>STRUCTURE BY NMR OF 1160-1214</scope>
</reference>
<reference key="11">
    <citation type="journal article" date="1998" name="Biochemistry">
        <title>Structural role of the 30's loop in determining the ligand specificity of the human immunodeficiency virus protease.</title>
        <authorList>
            <person name="Swairjo M.A."/>
            <person name="Towler E.M."/>
            <person name="Debouck C."/>
            <person name="Abdel-Meguid S.S."/>
        </authorList>
    </citation>
    <scope>X-RAY CRYSTALLOGRAPHY (2.8 ANGSTROMS) OF 501-599 IN COMPLEX WITH THE INHIBITOR SB203386</scope>
</reference>
<reference key="12">
    <citation type="journal article" date="1998" name="Protein Sci.">
        <title>Solution structure of the His12 --&gt; Cys mutant of the N-terminal zinc binding domain of HIV-1 integrase complexed to cadmium.</title>
        <authorList>
            <person name="Cai M."/>
            <person name="Huang Y."/>
            <person name="Caffrey M."/>
            <person name="Zheng R."/>
            <person name="Craigie R."/>
            <person name="Clore G.M."/>
            <person name="Gronenborn A.M."/>
        </authorList>
    </citation>
    <scope>STRUCTURE BY NMR OF 1160-1205</scope>
</reference>
<reference key="13">
    <citation type="journal article" date="2001" name="Proteins">
        <title>Structural implications of drug-resistant mutants of HIV-1 protease: high-resolution crystal structures of the mutant protease/substrate analogue complexes.</title>
        <authorList>
            <person name="Mahalingam B."/>
            <person name="Louis J.M."/>
            <person name="Hung J."/>
            <person name="Harrison R.W."/>
            <person name="Weber I.T."/>
        </authorList>
    </citation>
    <scope>X-RAY CRYSTALLOGRAPHY (1.78 ANGSTROMS) OF 501-599</scope>
</reference>
<reference key="14">
    <citation type="journal article" date="2001" name="J. Med. Chem.">
        <title>Synthesis and comparative molecular field analysis (CoMFA) of symmetric and nonsymmetric cyclic sulfamide HIV-1 protease inhibitors.</title>
        <authorList>
            <person name="Schaal W."/>
            <person name="Karlsson A."/>
            <person name="Ahlsen G."/>
            <person name="Lindberg J."/>
            <person name="Andersson H.O."/>
            <person name="Danielson U.H."/>
            <person name="Classon B."/>
            <person name="Unge T."/>
            <person name="Samuelsson B."/>
            <person name="Hulten J."/>
            <person name="Hallberg A."/>
            <person name="Karlen A."/>
        </authorList>
    </citation>
    <scope>X-RAY CRYSTALLOGRAPHY (1.95 ANGSTROMS) OF 501-599 IN COMPLEX WITH INHIBITORS</scope>
</reference>
<reference key="15">
    <citation type="journal article" date="2002" name="Proteins">
        <title>Combining mutations in HIV-1 protease to understand mechanisms of resistance.</title>
        <authorList>
            <person name="Mahalingam B."/>
            <person name="Boross P.I."/>
            <person name="Wang Y.-F."/>
            <person name="Louis J.M."/>
            <person name="Fischer C.C."/>
            <person name="Tozser J."/>
            <person name="Harrison R.W."/>
            <person name="Weber I.T."/>
        </authorList>
    </citation>
    <scope>X-RAY CRYSTALLOGRAPHY (1.2 ANGSTROMS) OF 501-599</scope>
</reference>
<reference key="16">
    <citation type="journal article" date="2003" name="J. Biol. Chem.">
        <title>Solution structure of the mature HIV-1 protease monomer: insight into the tertiary fold and stability of a precursor.</title>
        <authorList>
            <person name="Ishima R."/>
            <person name="Torchia D.A."/>
            <person name="Lynch S.M."/>
            <person name="Gronenborn A.M."/>
            <person name="Louis J.M."/>
        </authorList>
    </citation>
    <scope>STRUCTURE BY NMR OF 501-594</scope>
</reference>
<name>POL_HV1B5</name>
<comment type="function">
    <molecule>Gag-Pol polyprotein</molecule>
    <text evidence="1">Mediates, with Gag polyprotein, the essential events in virion assembly, including binding the plasma membrane, making the protein-protein interactions necessary to create spherical particles, recruiting the viral Env proteins, and packaging the genomic RNA via direct interactions with the RNA packaging sequence (Psi). Gag-Pol polyprotein may regulate its own translation, by the binding genomic RNA in the 5'-UTR. At low concentration, the polyprotein would promote translation, whereas at high concentration, the polyprotein would encapsidate genomic RNA and then shut off translation.</text>
</comment>
<comment type="function">
    <molecule>Matrix protein p17</molecule>
    <text evidence="7">Targets the polyprotein to the plasma membrane via a multipartite membrane-binding signal, that includes its myristoylated N-terminus. Matrix protein is part of the pre-integration complex. Implicated in the release from host cell mediated by Vpu. Binds to RNA.</text>
</comment>
<comment type="function">
    <molecule>Capsid protein p24</molecule>
    <text evidence="5 7">Forms the conical core that encapsulates the genomic RNA-nucleocapsid complex in the virion. Most core are conical, with only 7% tubular. The core is constituted by capsid protein hexamer subunits. The core is disassembled soon after virion entry (By similarity). Host restriction factors such as TRIM5-alpha or TRIMCyp bind retroviral capsids and cause premature capsid disassembly, leading to blocks in reverse transcription. Capsid restriction by TRIM5 is one of the factors which restricts HIV-1 to the human species. Host PIN1 apparently facilitates the virion uncoating. On the other hand, interactions with PDZD8 or CYPA stabilize the capsid.</text>
</comment>
<comment type="function">
    <molecule>Nucleocapsid protein p7</molecule>
    <text evidence="5">Encapsulates and protects viral dimeric unspliced genomic RNA (gRNA). Binds these RNAs through its zinc fingers. Acts as a nucleic acid chaperone which is involved in rearangement of nucleic acid secondary structure during gRNA retrotranscription. Also facilitates template switch leading to recombination. As part of the polyprotein, participates in gRNA dimerization, packaging, tRNA incorporation and virion assembly.</text>
</comment>
<comment type="function">
    <molecule>Protease</molecule>
    <text evidence="5 10">Aspartyl protease that mediates proteolytic cleavages of Gag and Gag-Pol polyproteins during or shortly after the release of the virion from the plasma membrane. Cleavages take place as an ordered, step-wise cascade to yield mature proteins. This process is called maturation. Displays maximal activity during the budding process just prior to particle release from the cell. Also cleaves Nef and Vif, probably concomitantly with viral structural proteins on maturation of virus particles. Hydrolyzes host EIF4GI and PABP1 in order to shut off the capped cellular mRNA translation. The resulting inhibition of cellular protein synthesis serves to ensure maximal viral gene expression and to evade host immune response. Also mediates cleavage of host YTHDF3. Mediates cleavage of host CARD8, thereby activating the CARD8 inflammasome, leading to the clearance of latent HIV-1 in patient CD4(+) T-cells after viral reactivation; in contrast, HIV-1 can evade CARD8-sensing when its protease remains inactive in infected cells prior to viral budding (By similarity).</text>
</comment>
<comment type="function">
    <molecule>Reverse transcriptase/ribonuclease H</molecule>
    <text evidence="5">Multifunctional enzyme that converts the viral RNA genome into dsDNA in the cytoplasm, shortly after virus entry into the cell. This enzyme displays a DNA polymerase activity that can copy either DNA or RNA templates, and a ribonuclease H (RNase H) activity that cleaves the RNA strand of RNA-DNA heteroduplexes in a partially processive 3' to 5' endonucleasic mode. Conversion of viral genomic RNA into dsDNA requires many steps. A tRNA(3)-Lys binds to the primer-binding site (PBS) situated at the 5'-end of the viral RNA. RT uses the 3' end of the tRNA primer to perform a short round of RNA-dependent minus-strand DNA synthesis. The reading proceeds through the U5 region and ends after the repeated (R) region which is present at both ends of viral RNA. The portion of the RNA-DNA heteroduplex is digested by the RNase H, resulting in a ssDNA product attached to the tRNA primer. This ssDNA/tRNA hybridizes with the identical R region situated at the 3' end of viral RNA. This template exchange, known as minus-strand DNA strong stop transfer, can be either intra- or intermolecular. RT uses the 3' end of this newly synthesized short ssDNA to perform the RNA-dependent minus-strand DNA synthesis of the whole template. RNase H digests the RNA template except for two polypurine tracts (PPTs) situated at the 5'-end and near the center of the genome. It is not clear if both polymerase and RNase H activities are simultaneous. RNase H probably can proceed both in a polymerase-dependent (RNA cut into small fragments by the same RT performing DNA synthesis) and a polymerase-independent mode (cleavage of remaining RNA fragments by free RTs). Secondly, RT performs DNA-directed plus-strand DNA synthesis using the PPTs that have not been removed by RNase H as primers. PPTs and tRNA primers are then removed by RNase H. The 3' and 5' ssDNA PBS regions hybridize to form a circular dsDNA intermediate. Strand displacement synthesis by RT to the PBS and PPT ends produces a blunt ended, linear dsDNA copy of the viral genome that includes long terminal repeats (LTRs) at both ends.</text>
</comment>
<comment type="function">
    <molecule>Integrase</molecule>
    <text evidence="5">Catalyzes viral DNA integration into the host chromosome, by performing a series of DNA cutting and joining reactions. This enzyme activity takes place after virion entry into a cell and reverse transcription of the RNA genome in dsDNA. The first step in the integration process is 3' processing. This step requires a complex comprising the viral genome, matrix protein, Vpr and integrase. This complex is called the pre-integration complex (PIC). The integrase protein removes 2 nucleotides from each 3' end of the viral DNA, leaving recessed CA OH's at the 3' ends. In the second step, the PIC enters cell nucleus. This process is mediated through integrase and Vpr proteins, and allows the virus to infect a non dividing cell. This ability to enter the nucleus is specific of lentiviruses, other retroviruses cannot and rely on cell division to access cell chromosomes. In the third step, termed strand transfer, the integrase protein joins the previously processed 3' ends to the 5' ends of strands of target cellular DNA at the site of integration. The 5'-ends are produced by integrase-catalyzed staggered cuts, 5 bp apart. A Y-shaped, gapped, recombination intermediate results, with the 5'-ends of the viral DNA strands and the 3' ends of target DNA strands remaining unjoined, flanking a gap of 5 bp. The last step is viral DNA integration into host chromosome. This involves host DNA repair synthesis in which the 5 bp gaps between the unjoined strands are filled in and then ligated. Since this process occurs at both cuts flanking the HIV genome, a 5 bp duplication of host DNA is produced at the ends of HIV-1 integration. Alternatively, Integrase may catalyze the excision of viral DNA just after strand transfer, this is termed disintegration.</text>
</comment>
<comment type="catalytic activity">
    <reaction evidence="10">
        <text>Specific for a P1 residue that is hydrophobic, and P1' variable, but often Pro.</text>
        <dbReference type="EC" id="3.4.23.16"/>
    </reaction>
</comment>
<comment type="catalytic activity">
    <reaction evidence="1">
        <text>Endohydrolysis of RNA in RNA/DNA hybrids. Three different cleavage modes: 1. sequence-specific internal cleavage of RNA. Human immunodeficiency virus type 1 and Moloney murine leukemia virus enzymes prefer to cleave the RNA strand one nucleotide away from the RNA-DNA junction. 2. RNA 5'-end directed cleavage 13-19 nucleotides from the RNA end. 3. DNA 3'-end directed cleavage 15-20 nucleotides away from the primer terminus.</text>
        <dbReference type="EC" id="3.1.26.13"/>
    </reaction>
</comment>
<comment type="catalytic activity">
    <reaction evidence="1">
        <text>3'-end directed exonucleolytic cleavage of viral RNA-DNA hybrid.</text>
        <dbReference type="EC" id="3.1.13.2"/>
    </reaction>
</comment>
<comment type="catalytic activity">
    <reaction evidence="11">
        <text>DNA(n) + a 2'-deoxyribonucleoside 5'-triphosphate = DNA(n+1) + diphosphate</text>
        <dbReference type="Rhea" id="RHEA:22508"/>
        <dbReference type="Rhea" id="RHEA-COMP:17339"/>
        <dbReference type="Rhea" id="RHEA-COMP:17340"/>
        <dbReference type="ChEBI" id="CHEBI:33019"/>
        <dbReference type="ChEBI" id="CHEBI:61560"/>
        <dbReference type="ChEBI" id="CHEBI:173112"/>
        <dbReference type="EC" id="2.7.7.49"/>
    </reaction>
</comment>
<comment type="catalytic activity">
    <reaction evidence="11">
        <text>DNA(n) + a 2'-deoxyribonucleoside 5'-triphosphate = DNA(n+1) + diphosphate</text>
        <dbReference type="Rhea" id="RHEA:22508"/>
        <dbReference type="Rhea" id="RHEA-COMP:17339"/>
        <dbReference type="Rhea" id="RHEA-COMP:17340"/>
        <dbReference type="ChEBI" id="CHEBI:33019"/>
        <dbReference type="ChEBI" id="CHEBI:61560"/>
        <dbReference type="ChEBI" id="CHEBI:173112"/>
        <dbReference type="EC" id="2.7.7.7"/>
    </reaction>
</comment>
<comment type="cofactor">
    <cofactor evidence="1">
        <name>Mg(2+)</name>
        <dbReference type="ChEBI" id="CHEBI:18420"/>
    </cofactor>
    <text evidence="1">Binds 2 magnesium ions for reverse transcriptase polymerase activity.</text>
</comment>
<comment type="cofactor">
    <cofactor evidence="1">
        <name>Mg(2+)</name>
        <dbReference type="ChEBI" id="CHEBI:18420"/>
    </cofactor>
    <text evidence="1">Binds 2 magnesium ions for ribonuclease H (RNase H) activity. Substrate-binding is a precondition for magnesium binding.</text>
</comment>
<comment type="cofactor">
    <cofactor evidence="1">
        <name>Mg(2+)</name>
        <dbReference type="ChEBI" id="CHEBI:18420"/>
    </cofactor>
    <text evidence="1">Magnesium ions are required for integrase activity. Binds at least 1, maybe 2 magnesium ions.</text>
</comment>
<comment type="activity regulation">
    <text evidence="1">Protease: The viral protease is inhibited by many synthetic protease inhibitors (PIs), such as amprenavir, atazanavir, indinavir, loprinavir, nelfinavir, ritonavir and saquinavir. Use of protease inhibitors in tritherapy regimens permit more ambitious therapeutic strategies. Reverse transcriptase/ribonuclease H: RT can be inhibited either by nucleoside RT inhibitors (NRTIs) or by non nucleoside RT inhibitors (NNRTIs). NRTIs act as chain terminators, whereas NNRTIs inhibit DNA polymerization by binding a small hydrophobic pocket near the RT active site and inducing an allosteric change in this region. Classical NRTIs are abacavir, adefovir (PMEA), didanosine (ddI), lamivudine (3TC), stavudine (d4T), tenofovir (PMPA), zalcitabine (ddC), and zidovudine (AZT). Classical NNRTIs are atevirdine (BHAP U-87201E), delavirdine, efavirenz (DMP-266), emivirine (I-EBU), and nevirapine (BI-RG-587). The tritherapies used as a basic effective treatment of AIDS associate two NRTIs and one NNRTI.</text>
</comment>
<comment type="subunit">
    <molecule>Matrix protein p17</molecule>
    <text evidence="5 7">Homotrimer; further assembles as hexamers of trimers (By similarity). Interacts with gp41 (via C-terminus) (By similarity). Interacts with host CALM1; this interaction induces a conformational change in the Matrix protein, triggering exposure of the myristate group (By similarity). Interacts with host AP3D1; this interaction allows the polyprotein trafficking to multivesicular bodies during virus assembly (By similarity). Part of the pre-integration complex (PIC) which is composed of viral genome, matrix protein, Vpr and integrase (By similarity).</text>
</comment>
<comment type="subunit">
    <molecule>Capsid protein p24</molecule>
    <text evidence="5 7">Homodimer; the homodimer further multimerizes as homohexamers or homopentamers. Interacts with human PPIA/CYPA (By similarity); This interaction stabilizes the capsid. Interacts with human NUP153 (By similarity). Interacts with host PDZD8; this interaction stabilizes the capsid (By similarity). Interacts with monkey TRIM5; this interaction destabilizes the capsid (By similarity).</text>
</comment>
<comment type="subunit">
    <molecule>Protease</molecule>
    <text evidence="5 7">Homodimer, whose active site consists of two apposed aspartic acid residues.</text>
</comment>
<comment type="subunit">
    <molecule>Reverse transcriptase/ribonuclease H</molecule>
    <text evidence="3">Heterodimer of p66 RT and p51 RT (RT p66/p51) (By similarity). Heterodimerization of RT is essential for DNA polymerase activity (By similarity). The overall folding of the subdomains is similar in p66 RT and p51 RT but the spatial arrangements of the subdomains are dramatically different (By similarity).</text>
</comment>
<comment type="subunit">
    <molecule>Integrase</molecule>
    <text evidence="4 5 7">Homotetramer; may further associate as a homohexadecamer (By similarity). Part of the pre-integration complex (PIC) which is composed of viral genome, matrix protein, Vpr and integrase. Interacts with human SMARCB1/INI1 and human PSIP1/LEDGF isoform 1. Interacts with human KPNA3; this interaction might play a role in nuclear import of the pre-integration complex (By similarity). Interacts with human NUP153; this interaction might play a role in nuclear import of the pre-integration complex (By similarity).</text>
</comment>
<comment type="subcellular location">
    <molecule>Gag-Pol polyprotein</molecule>
    <subcellularLocation>
        <location>Host cell membrane</location>
        <topology>Lipid-anchor</topology>
    </subcellularLocation>
    <subcellularLocation>
        <location>Host endosome</location>
        <location>Host multivesicular body</location>
    </subcellularLocation>
    <text evidence="7">These locations are linked to virus assembly sites. The main location is the cell membrane, but under some circumstances, late endosomal compartments can serve as productive sites for virion assembly.</text>
</comment>
<comment type="subcellular location">
    <molecule>Matrix protein p17</molecule>
    <subcellularLocation>
        <location>Virion membrane</location>
        <topology evidence="18">Lipid-anchor</topology>
    </subcellularLocation>
    <subcellularLocation>
        <location evidence="1">Host nucleus</location>
    </subcellularLocation>
    <subcellularLocation>
        <location evidence="1">Host cytoplasm</location>
    </subcellularLocation>
</comment>
<comment type="subcellular location">
    <molecule>Capsid protein p24</molecule>
    <subcellularLocation>
        <location evidence="18">Virion</location>
    </subcellularLocation>
</comment>
<comment type="subcellular location">
    <molecule>Nucleocapsid protein p7</molecule>
    <subcellularLocation>
        <location evidence="18">Virion</location>
    </subcellularLocation>
</comment>
<comment type="subcellular location">
    <molecule>Reverse transcriptase/ribonuclease H</molecule>
    <subcellularLocation>
        <location evidence="18">Virion</location>
    </subcellularLocation>
</comment>
<comment type="subcellular location">
    <molecule>Integrase</molecule>
    <subcellularLocation>
        <location evidence="18">Virion</location>
    </subcellularLocation>
    <subcellularLocation>
        <location evidence="18">Host nucleus</location>
    </subcellularLocation>
    <subcellularLocation>
        <location evidence="18">Host cytoplasm</location>
    </subcellularLocation>
    <text evidence="18">Nuclear at initial phase, cytoplasmic at assembly.</text>
</comment>
<comment type="alternative products">
    <event type="ribosomal frameshifting"/>
    <isoform>
        <id>P04587-1</id>
        <name>Gag-Pol polyprotein</name>
        <sequence type="displayed"/>
    </isoform>
    <isoform>
        <id>P04593-1</id>
        <name>Gag polyprotein</name>
        <sequence type="external"/>
    </isoform>
    <text>Translation results in the formation of the Gag polyprotein most of the time. Ribosomal frameshifting at the gag-pol genes boundary occurs at low frequency and produces the Gag-Pol polyprotein. This strategy of translation probably allows the virus to modulate the quantity of each viral protein. Maintenance of a correct Gag to Gag-Pol ratio is essential for RNA dimerization and viral infectivity.</text>
</comment>
<comment type="domain">
    <molecule>Reverse transcriptase/ribonuclease H</molecule>
    <text evidence="1">RT is structured in five subdomains: finger, palm, thumb, connection and RNase H. Within the palm subdomain, the 'primer grip' region is thought to be involved in the positioning of the primer terminus for accommodating the incoming nucleotide. The RNase H domain stabilizes the association of RT with primer-template.</text>
</comment>
<comment type="domain">
    <molecule>Reverse transcriptase/ribonuclease H</molecule>
    <text evidence="1">The tryptophan repeat motif is involved in RT p66/p51 dimerization (By similarity).</text>
</comment>
<comment type="domain">
    <molecule>Integrase</molecule>
    <text evidence="1">The core domain contains the D-x(n)-D-x(35)-E motif, named for the phylogenetically conserved glutamic acid and aspartic acid residues and the invariant 35 amino acid spacing between the second and third acidic residues. Each acidic residue of the D,D(35)E motif is independently essential for the 3'-processing and strand transfer activities of purified integrase protein.</text>
</comment>
<comment type="PTM">
    <molecule>Gag-Pol polyprotein</molecule>
    <text evidence="5 11">Specific enzymatic cleavages by the viral protease yield mature proteins. The protease is released by autocatalytic cleavage. The polyprotein is cleaved during and after budding, this process is termed maturation. Proteolytic cleavage of p66 RT removes the RNase H domain to yield the p51 RT subunit. Nucleocapsid protein p7 might be further cleaved after virus entry.</text>
</comment>
<comment type="PTM">
    <molecule>Matrix protein p17</molecule>
    <text evidence="5">Tyrosine phosphorylated presumably in the virion by a host kinase. Phosphorylation is apparently not a major regulator of membrane association.</text>
</comment>
<comment type="PTM">
    <molecule>Capsid protein p24</molecule>
    <text evidence="6">Phosphorylated possibly by host MAPK1; this phosphorylation is necessary for Pin1-mediated virion uncoating.</text>
</comment>
<comment type="PTM">
    <molecule>Nucleocapsid protein p7</molecule>
    <text evidence="2">Methylated by host PRMT6, impairing its function by reducing RNA annealing and the initiation of reverse transcription.</text>
</comment>
<comment type="miscellaneous">
    <molecule>Reverse transcriptase/ribonuclease H</molecule>
    <text evidence="1">Error-prone enzyme that lacks a proof-reading function. High mutations rate is a direct consequence of this characteristic. RT also displays frequent template switching leading to high recombination rate. Recombination mostly occurs between homologous regions of the two copackaged RNA genomes. If these two RNA molecules derive from different viral strains, reverse transcription will give rise to highly recombinated proviral DNAs.</text>
</comment>
<comment type="miscellaneous">
    <text>HIV-1 lineages are divided in three main groups, M (for Major), O (for Outlier), and N (for New, or Non-M, Non-O). The vast majority of strains found worldwide belong to the group M. Group O seems to be endemic to and largely confined to Cameroon and neighboring countries in West Central Africa, where these viruses represent a small minority of HIV-1 strains. The group N is represented by a limited number of isolates from Cameroonian persons. The group M is further subdivided in 9 clades or subtypes (A to D, F to H, J and K).</text>
</comment>
<comment type="miscellaneous">
    <text>Resistance to inhibitors associated with mutations are observed both in viral protease and in reverse transcriptase. Most of the time, single mutations confer only a modest reduction in drug susceptibility. Combination of several mutations is usually required to develop a high-level drug resistance. These mutations are predominantly found in clade B viruses and not in other genotypes. They are listed in the clade B representative isolate HXB2 (AC P04585).</text>
</comment>
<comment type="miscellaneous">
    <molecule>Isoform Gag-Pol polyprotein</molecule>
    <text>Produced by -1 ribosomal frameshifting.</text>
</comment>
<comment type="online information" name="HIV drug resistance mutations">
    <link uri="https://www.iasusa.org/hiv-drug-resistance/hiv-drug-resistance-mutations/"/>
</comment>
<comment type="online information" name="hivdb">
    <link uri="https://hivdb.stanford.edu"/>
    <text>HIV drug resistance database</text>
</comment>
<feature type="initiator methionine" description="Removed; by host" evidence="1">
    <location>
        <position position="1"/>
    </location>
</feature>
<feature type="chain" id="PRO_0000261262" description="Gag-Pol polyprotein">
    <location>
        <begin position="2"/>
        <end position="1447"/>
    </location>
</feature>
<feature type="chain" id="PRO_0000042294" description="Matrix protein p17" evidence="1">
    <location>
        <begin position="2"/>
        <end position="132"/>
    </location>
</feature>
<feature type="chain" id="PRO_0000042295" description="Capsid protein p24" evidence="1">
    <location>
        <begin position="133"/>
        <end position="363"/>
    </location>
</feature>
<feature type="peptide" id="PRO_0000042296" description="Spacer peptide 1" evidence="1">
    <location>
        <begin position="364"/>
        <end position="377"/>
    </location>
</feature>
<feature type="chain" id="PRO_0000042297" description="Nucleocapsid protein p7" evidence="1">
    <location>
        <begin position="378"/>
        <end position="432"/>
    </location>
</feature>
<feature type="peptide" id="PRO_0000246711" description="Transframe peptide" evidence="8">
    <location>
        <begin position="433"/>
        <end position="440"/>
    </location>
</feature>
<feature type="chain" id="PRO_0000042298" description="p6-pol" evidence="8">
    <location>
        <begin position="441"/>
        <end position="500"/>
    </location>
</feature>
<feature type="chain" id="PRO_0000038648" description="Protease" evidence="1">
    <location>
        <begin position="501"/>
        <end position="599"/>
    </location>
</feature>
<feature type="chain" id="PRO_0000042299" description="Reverse transcriptase/ribonuclease H" evidence="1">
    <location>
        <begin position="600"/>
        <end position="1159"/>
    </location>
</feature>
<feature type="chain" id="PRO_0000042300" description="p51 RT" evidence="1">
    <location>
        <begin position="600"/>
        <end position="1039"/>
    </location>
</feature>
<feature type="chain" id="PRO_0000042301" description="p15" evidence="1">
    <location>
        <begin position="1040"/>
        <end position="1159"/>
    </location>
</feature>
<feature type="chain" id="PRO_0000042302" description="Integrase" evidence="1">
    <location>
        <begin position="1160"/>
        <end position="1447"/>
    </location>
</feature>
<feature type="domain" description="Peptidase A2" evidence="10">
    <location>
        <begin position="520"/>
        <end position="589"/>
    </location>
</feature>
<feature type="domain" description="Reverse transcriptase" evidence="11">
    <location>
        <begin position="643"/>
        <end position="833"/>
    </location>
</feature>
<feature type="domain" description="RNase H type-1" evidence="12">
    <location>
        <begin position="1033"/>
        <end position="1156"/>
    </location>
</feature>
<feature type="domain" description="Integrase catalytic" evidence="14">
    <location>
        <begin position="1213"/>
        <end position="1363"/>
    </location>
</feature>
<feature type="zinc finger region" description="CCHC-type 1" evidence="9">
    <location>
        <begin position="390"/>
        <end position="407"/>
    </location>
</feature>
<feature type="zinc finger region" description="CCHC-type 2" evidence="9">
    <location>
        <begin position="411"/>
        <end position="428"/>
    </location>
</feature>
<feature type="zinc finger region" description="Integrase-type" evidence="13">
    <location>
        <begin position="1162"/>
        <end position="1203"/>
    </location>
</feature>
<feature type="DNA-binding region" description="Integrase-type" evidence="15">
    <location>
        <begin position="1382"/>
        <end position="1429"/>
    </location>
</feature>
<feature type="region of interest" description="Interaction with Gp41" evidence="7">
    <location>
        <begin position="7"/>
        <end position="31"/>
    </location>
</feature>
<feature type="region of interest" description="Interaction with host CALM1" evidence="5">
    <location>
        <begin position="8"/>
        <end position="43"/>
    </location>
</feature>
<feature type="region of interest" description="Interaction with host AP3D1" evidence="7">
    <location>
        <begin position="12"/>
        <end position="19"/>
    </location>
</feature>
<feature type="region of interest" description="Interaction with membrane phosphatidylinositol 4,5-bisphosphate and RNA" evidence="7">
    <location>
        <begin position="14"/>
        <end position="33"/>
    </location>
</feature>
<feature type="region of interest" description="Interaction with membrane phosphatidylinositol 4,5-bisphosphate" evidence="7">
    <location>
        <begin position="73"/>
        <end position="77"/>
    </location>
</feature>
<feature type="region of interest" description="Disordered" evidence="17">
    <location>
        <begin position="106"/>
        <end position="128"/>
    </location>
</feature>
<feature type="region of interest" description="Interaction with human PPIA/CYPA and NUP153" evidence="7">
    <location>
        <begin position="189"/>
        <end position="227"/>
    </location>
</feature>
<feature type="region of interest" description="Dimerization/Multimerization of capsid protein p24" evidence="5">
    <location>
        <begin position="277"/>
        <end position="363"/>
    </location>
</feature>
<feature type="region of interest" description="Disordered" evidence="17">
    <location>
        <begin position="446"/>
        <end position="493"/>
    </location>
</feature>
<feature type="region of interest" description="Dimerization of protease" evidence="5">
    <location>
        <begin position="501"/>
        <end position="505"/>
    </location>
</feature>
<feature type="region of interest" description="Dimerization of protease" evidence="5">
    <location>
        <begin position="549"/>
        <end position="555"/>
    </location>
</feature>
<feature type="region of interest" description="Dimerization of protease" evidence="5">
    <location>
        <begin position="588"/>
        <end position="600"/>
    </location>
</feature>
<feature type="region of interest" description="RT 'primer grip'" evidence="1">
    <location>
        <begin position="826"/>
        <end position="834"/>
    </location>
</feature>
<feature type="short sequence motif" description="Nuclear export signal" evidence="1">
    <location>
        <begin position="16"/>
        <end position="22"/>
    </location>
</feature>
<feature type="short sequence motif" description="Nuclear localization signal" evidence="1">
    <location>
        <begin position="26"/>
        <end position="32"/>
    </location>
</feature>
<feature type="short sequence motif" description="Tryptophan repeat motif" evidence="1">
    <location>
        <begin position="997"/>
        <end position="1013"/>
    </location>
</feature>
<feature type="compositionally biased region" description="Polar residues" evidence="17">
    <location>
        <begin position="450"/>
        <end position="470"/>
    </location>
</feature>
<feature type="active site" description="For protease activity; shared with dimeric partner" evidence="16">
    <location>
        <position position="525"/>
    </location>
</feature>
<feature type="binding site" evidence="1">
    <location>
        <position position="709"/>
    </location>
    <ligand>
        <name>Mg(2+)</name>
        <dbReference type="ChEBI" id="CHEBI:18420"/>
        <label>1</label>
        <note>catalytic; for reverse transcriptase activity</note>
    </ligand>
</feature>
<feature type="binding site" evidence="1">
    <location>
        <position position="784"/>
    </location>
    <ligand>
        <name>Mg(2+)</name>
        <dbReference type="ChEBI" id="CHEBI:18420"/>
        <label>1</label>
        <note>catalytic; for reverse transcriptase activity</note>
    </ligand>
</feature>
<feature type="binding site" evidence="1">
    <location>
        <position position="785"/>
    </location>
    <ligand>
        <name>Mg(2+)</name>
        <dbReference type="ChEBI" id="CHEBI:18420"/>
        <label>1</label>
        <note>catalytic; for reverse transcriptase activity</note>
    </ligand>
</feature>
<feature type="binding site" evidence="1">
    <location>
        <position position="1042"/>
    </location>
    <ligand>
        <name>Mg(2+)</name>
        <dbReference type="ChEBI" id="CHEBI:18420"/>
        <label>2</label>
        <note>catalytic; for RNase H activity</note>
    </ligand>
</feature>
<feature type="binding site" evidence="1">
    <location>
        <position position="1077"/>
    </location>
    <ligand>
        <name>Mg(2+)</name>
        <dbReference type="ChEBI" id="CHEBI:18420"/>
        <label>2</label>
        <note>catalytic; for RNase H activity</note>
    </ligand>
</feature>
<feature type="binding site" evidence="1">
    <location>
        <position position="1097"/>
    </location>
    <ligand>
        <name>Mg(2+)</name>
        <dbReference type="ChEBI" id="CHEBI:18420"/>
        <label>2</label>
        <note>catalytic; for RNase H activity</note>
    </ligand>
</feature>
<feature type="binding site" evidence="1">
    <location>
        <position position="1148"/>
    </location>
    <ligand>
        <name>Mg(2+)</name>
        <dbReference type="ChEBI" id="CHEBI:18420"/>
        <label>2</label>
        <note>catalytic; for RNase H activity</note>
    </ligand>
</feature>
<feature type="binding site" evidence="13">
    <location>
        <position position="1171"/>
    </location>
    <ligand>
        <name>Zn(2+)</name>
        <dbReference type="ChEBI" id="CHEBI:29105"/>
    </ligand>
</feature>
<feature type="binding site" evidence="13">
    <location>
        <position position="1175"/>
    </location>
    <ligand>
        <name>Zn(2+)</name>
        <dbReference type="ChEBI" id="CHEBI:29105"/>
    </ligand>
</feature>
<feature type="binding site" evidence="13">
    <location>
        <position position="1199"/>
    </location>
    <ligand>
        <name>Zn(2+)</name>
        <dbReference type="ChEBI" id="CHEBI:29105"/>
    </ligand>
</feature>
<feature type="binding site" evidence="13">
    <location>
        <position position="1202"/>
    </location>
    <ligand>
        <name>Zn(2+)</name>
        <dbReference type="ChEBI" id="CHEBI:29105"/>
    </ligand>
</feature>
<feature type="binding site" evidence="1">
    <location>
        <position position="1223"/>
    </location>
    <ligand>
        <name>Mg(2+)</name>
        <dbReference type="ChEBI" id="CHEBI:18420"/>
        <label>3</label>
        <note>catalytic; for integrase activity</note>
    </ligand>
</feature>
<feature type="binding site" evidence="1">
    <location>
        <position position="1275"/>
    </location>
    <ligand>
        <name>Mg(2+)</name>
        <dbReference type="ChEBI" id="CHEBI:18420"/>
        <label>3</label>
        <note>catalytic; for integrase activity</note>
    </ligand>
</feature>
<feature type="binding site" evidence="5">
    <location>
        <position position="1311"/>
    </location>
    <ligand>
        <name>Mg(2+)</name>
        <dbReference type="ChEBI" id="CHEBI:18420"/>
        <label>3</label>
        <note>catalytic; for integrase activity</note>
    </ligand>
</feature>
<feature type="site" description="Cleavage; by viral protease" evidence="1">
    <location>
        <begin position="132"/>
        <end position="133"/>
    </location>
</feature>
<feature type="site" description="Cis/trans isomerization of proline peptide bond; by human PPIA/CYPA" evidence="1">
    <location>
        <begin position="221"/>
        <end position="222"/>
    </location>
</feature>
<feature type="site" description="Cleavage; by viral protease" evidence="1">
    <location>
        <begin position="363"/>
        <end position="364"/>
    </location>
</feature>
<feature type="site" description="Cleavage; by viral protease" evidence="1">
    <location>
        <begin position="377"/>
        <end position="378"/>
    </location>
</feature>
<feature type="site" description="Cleavage; by viral protease" evidence="8">
    <location>
        <begin position="432"/>
        <end position="433"/>
    </location>
</feature>
<feature type="site" description="Cleavage; by viral protease" evidence="1">
    <location>
        <begin position="440"/>
        <end position="441"/>
    </location>
</feature>
<feature type="site" description="Cleavage; by viral protease" evidence="1">
    <location>
        <begin position="500"/>
        <end position="501"/>
    </location>
</feature>
<feature type="site" description="Cleavage; by viral protease" evidence="1">
    <location>
        <begin position="599"/>
        <end position="600"/>
    </location>
</feature>
<feature type="site" description="Essential for RT p66/p51 heterodimerization" evidence="1">
    <location>
        <position position="1000"/>
    </location>
</feature>
<feature type="site" description="Essential for RT p66/p51 heterodimerization" evidence="1">
    <location>
        <position position="1013"/>
    </location>
</feature>
<feature type="site" description="Cleavage; by viral protease; partial" evidence="1">
    <location>
        <begin position="1039"/>
        <end position="1040"/>
    </location>
</feature>
<feature type="site" description="Cleavage; by viral protease" evidence="1">
    <location>
        <begin position="1159"/>
        <end position="1160"/>
    </location>
</feature>
<feature type="modified residue" description="Phosphotyrosine; by host" evidence="1">
    <location>
        <position position="132"/>
    </location>
</feature>
<feature type="lipid moiety-binding region" description="N-myristoyl glycine; by host" evidence="1">
    <location>
        <position position="2"/>
    </location>
</feature>
<feature type="strand" evidence="19">
    <location>
        <begin position="502"/>
        <end position="504"/>
    </location>
</feature>
<feature type="strand" evidence="24">
    <location>
        <begin position="505"/>
        <end position="507"/>
    </location>
</feature>
<feature type="strand" evidence="24">
    <location>
        <begin position="510"/>
        <end position="515"/>
    </location>
</feature>
<feature type="strand" evidence="24">
    <location>
        <begin position="518"/>
        <end position="524"/>
    </location>
</feature>
<feature type="strand" evidence="23">
    <location>
        <begin position="532"/>
        <end position="535"/>
    </location>
</feature>
<feature type="strand" evidence="24">
    <location>
        <begin position="542"/>
        <end position="549"/>
    </location>
</feature>
<feature type="strand" evidence="24">
    <location>
        <begin position="552"/>
        <end position="566"/>
    </location>
</feature>
<feature type="strand" evidence="24">
    <location>
        <begin position="569"/>
        <end position="578"/>
    </location>
</feature>
<feature type="strand" evidence="20">
    <location>
        <begin position="581"/>
        <end position="585"/>
    </location>
</feature>
<feature type="helix" evidence="24">
    <location>
        <begin position="587"/>
        <end position="590"/>
    </location>
</feature>
<feature type="helix" evidence="24">
    <location>
        <begin position="591"/>
        <end position="593"/>
    </location>
</feature>
<feature type="strand" evidence="24">
    <location>
        <begin position="596"/>
        <end position="598"/>
    </location>
</feature>
<feature type="helix" evidence="21">
    <location>
        <begin position="1163"/>
        <end position="1174"/>
    </location>
</feature>
<feature type="helix" evidence="21">
    <location>
        <begin position="1178"/>
        <end position="1185"/>
    </location>
</feature>
<feature type="helix" evidence="21">
    <location>
        <begin position="1189"/>
        <end position="1198"/>
    </location>
</feature>
<feature type="helix" evidence="21">
    <location>
        <begin position="1200"/>
        <end position="1203"/>
    </location>
</feature>
<feature type="strand" evidence="22">
    <location>
        <begin position="1204"/>
        <end position="1207"/>
    </location>
</feature>
<accession>P04587</accession>
<dbReference type="EC" id="3.4.23.16"/>
<dbReference type="EC" id="2.7.7.49"/>
<dbReference type="EC" id="2.7.7.7"/>
<dbReference type="EC" id="3.1.26.13"/>
<dbReference type="EC" id="3.1.13.2"/>
<dbReference type="EC" id="2.7.7.-" evidence="5"/>
<dbReference type="EC" id="3.1.-.-" evidence="5"/>
<dbReference type="EMBL" id="K02012">
    <property type="protein sequence ID" value="AAA44653.1"/>
    <property type="status" value="ALT_SEQ"/>
    <property type="molecule type" value="Genomic_RNA"/>
</dbReference>
<dbReference type="PDB" id="1BDL">
    <property type="method" value="X-ray"/>
    <property type="resolution" value="2.80 A"/>
    <property type="chains" value="A/B=501-599"/>
</dbReference>
<dbReference type="PDB" id="1BDQ">
    <property type="method" value="X-ray"/>
    <property type="resolution" value="2.50 A"/>
    <property type="chains" value="A/B=501-599"/>
</dbReference>
<dbReference type="PDB" id="1BDR">
    <property type="method" value="X-ray"/>
    <property type="resolution" value="2.80 A"/>
    <property type="chains" value="A/B=501-599"/>
</dbReference>
<dbReference type="PDB" id="1FEJ">
    <property type="method" value="X-ray"/>
    <property type="resolution" value="1.78 A"/>
    <property type="chains" value="C/D=501-599"/>
</dbReference>
<dbReference type="PDB" id="1FF0">
    <property type="method" value="X-ray"/>
    <property type="resolution" value="1.85 A"/>
    <property type="chains" value="C/D=501-599"/>
</dbReference>
<dbReference type="PDB" id="1FFF">
    <property type="method" value="X-ray"/>
    <property type="resolution" value="1.90 A"/>
    <property type="chains" value="C/D=501-599"/>
</dbReference>
<dbReference type="PDB" id="1FFI">
    <property type="method" value="X-ray"/>
    <property type="resolution" value="1.70 A"/>
    <property type="chains" value="C/D=501-599"/>
</dbReference>
<dbReference type="PDB" id="1FG6">
    <property type="method" value="X-ray"/>
    <property type="resolution" value="1.80 A"/>
    <property type="chains" value="C/D=501-599"/>
</dbReference>
<dbReference type="PDB" id="1FG8">
    <property type="method" value="X-ray"/>
    <property type="resolution" value="1.85 A"/>
    <property type="chains" value="C/D=501-599"/>
</dbReference>
<dbReference type="PDB" id="1FGC">
    <property type="method" value="X-ray"/>
    <property type="resolution" value="1.90 A"/>
    <property type="chains" value="C/D=501-599"/>
</dbReference>
<dbReference type="PDB" id="1G2K">
    <property type="method" value="X-ray"/>
    <property type="resolution" value="1.95 A"/>
    <property type="chains" value="A/B=501-599"/>
</dbReference>
<dbReference type="PDB" id="1HPV">
    <property type="method" value="X-ray"/>
    <property type="resolution" value="1.90 A"/>
    <property type="chains" value="A/B=501-599"/>
</dbReference>
<dbReference type="PDB" id="1HVJ">
    <property type="method" value="X-ray"/>
    <property type="resolution" value="2.00 A"/>
    <property type="chains" value="A/B=501-599"/>
</dbReference>
<dbReference type="PDB" id="1HVS">
    <property type="method" value="X-ray"/>
    <property type="resolution" value="2.25 A"/>
    <property type="chains" value="A/B=501-599"/>
</dbReference>
<dbReference type="PDB" id="1K1T">
    <property type="method" value="X-ray"/>
    <property type="resolution" value="1.20 A"/>
    <property type="chains" value="A/B=501-599"/>
</dbReference>
<dbReference type="PDB" id="1K1U">
    <property type="method" value="X-ray"/>
    <property type="resolution" value="1.55 A"/>
    <property type="chains" value="A/B=501-599"/>
</dbReference>
<dbReference type="PDB" id="1K2B">
    <property type="method" value="X-ray"/>
    <property type="resolution" value="1.70 A"/>
    <property type="chains" value="A/B=501-599"/>
</dbReference>
<dbReference type="PDB" id="1K2C">
    <property type="method" value="X-ray"/>
    <property type="resolution" value="2.20 A"/>
    <property type="chains" value="A/B=501-599"/>
</dbReference>
<dbReference type="PDB" id="1ODX">
    <property type="method" value="X-ray"/>
    <property type="resolution" value="2.00 A"/>
    <property type="chains" value="A/B=501-599"/>
</dbReference>
<dbReference type="PDB" id="1Q9P">
    <property type="method" value="NMR"/>
    <property type="chains" value="A=501-595"/>
</dbReference>
<dbReference type="PDB" id="1TCX">
    <property type="method" value="X-ray"/>
    <property type="resolution" value="2.30 A"/>
    <property type="chains" value="A/B=501-599"/>
</dbReference>
<dbReference type="PDB" id="1WJE">
    <property type="method" value="NMR"/>
    <property type="chains" value="A/B=1160-1205"/>
</dbReference>
<dbReference type="PDB" id="1WJF">
    <property type="method" value="NMR"/>
    <property type="chains" value="A/B=1160-1214"/>
</dbReference>
<dbReference type="PDB" id="2AOC">
    <property type="method" value="X-ray"/>
    <property type="resolution" value="1.30 A"/>
    <property type="chains" value="A/B=501-599"/>
</dbReference>
<dbReference type="PDB" id="2AOD">
    <property type="method" value="X-ray"/>
    <property type="resolution" value="1.40 A"/>
    <property type="chains" value="A/B=501-599"/>
</dbReference>
<dbReference type="PDB" id="2AOE">
    <property type="method" value="X-ray"/>
    <property type="resolution" value="1.54 A"/>
    <property type="chains" value="A/B=501-599"/>
</dbReference>
<dbReference type="PDB" id="2AOF">
    <property type="method" value="X-ray"/>
    <property type="resolution" value="1.32 A"/>
    <property type="chains" value="A/B=501-599"/>
</dbReference>
<dbReference type="PDB" id="2AOG">
    <property type="method" value="X-ray"/>
    <property type="resolution" value="1.10 A"/>
    <property type="chains" value="A/B=501-599"/>
</dbReference>
<dbReference type="PDB" id="2AOH">
    <property type="method" value="X-ray"/>
    <property type="resolution" value="1.42 A"/>
    <property type="chains" value="A/B=501-599"/>
</dbReference>
<dbReference type="PDB" id="2AOI">
    <property type="method" value="X-ray"/>
    <property type="resolution" value="1.40 A"/>
    <property type="chains" value="A/B=501-599"/>
</dbReference>
<dbReference type="PDB" id="2AOJ">
    <property type="method" value="X-ray"/>
    <property type="resolution" value="1.60 A"/>
    <property type="chains" value="A/B=501-599"/>
</dbReference>
<dbReference type="PDB" id="2AVM">
    <property type="method" value="X-ray"/>
    <property type="resolution" value="1.10 A"/>
    <property type="chains" value="A/B=501-599"/>
</dbReference>
<dbReference type="PDB" id="2AVO">
    <property type="method" value="X-ray"/>
    <property type="resolution" value="1.10 A"/>
    <property type="chains" value="A/B=501-599"/>
</dbReference>
<dbReference type="PDB" id="2AVQ">
    <property type="method" value="X-ray"/>
    <property type="resolution" value="1.30 A"/>
    <property type="chains" value="A/B=501-599"/>
</dbReference>
<dbReference type="PDB" id="2AVS">
    <property type="method" value="X-ray"/>
    <property type="resolution" value="1.10 A"/>
    <property type="chains" value="A/B=501-599"/>
</dbReference>
<dbReference type="PDB" id="2AVV">
    <property type="method" value="X-ray"/>
    <property type="resolution" value="1.50 A"/>
    <property type="chains" value="A/B/D/E=501-599"/>
</dbReference>
<dbReference type="PDB" id="2BPV">
    <property type="method" value="X-ray"/>
    <property type="resolution" value="1.90 A"/>
    <property type="chains" value="A/B=501-599"/>
</dbReference>
<dbReference type="PDB" id="2BPW">
    <property type="method" value="X-ray"/>
    <property type="resolution" value="2.80 A"/>
    <property type="chains" value="A/B=501-599"/>
</dbReference>
<dbReference type="PDB" id="2BPX">
    <property type="method" value="X-ray"/>
    <property type="resolution" value="2.80 A"/>
    <property type="chains" value="A/B=501-599"/>
</dbReference>
<dbReference type="PDB" id="2BPY">
    <property type="method" value="X-ray"/>
    <property type="resolution" value="1.90 A"/>
    <property type="chains" value="A/B=501-599"/>
</dbReference>
<dbReference type="PDB" id="2BPZ">
    <property type="method" value="X-ray"/>
    <property type="resolution" value="2.50 A"/>
    <property type="chains" value="A/B=501-599"/>
</dbReference>
<dbReference type="PDB" id="2F80">
    <property type="method" value="X-ray"/>
    <property type="resolution" value="1.45 A"/>
    <property type="chains" value="A/B=501-599"/>
</dbReference>
<dbReference type="PDB" id="2F81">
    <property type="method" value="X-ray"/>
    <property type="resolution" value="1.25 A"/>
    <property type="chains" value="A/B=501-599"/>
</dbReference>
<dbReference type="PDB" id="2F8G">
    <property type="method" value="X-ray"/>
    <property type="resolution" value="1.22 A"/>
    <property type="chains" value="A/B=501-599"/>
</dbReference>
<dbReference type="PDB" id="2NMY">
    <property type="method" value="X-ray"/>
    <property type="resolution" value="1.10 A"/>
    <property type="chains" value="A/B=501-598"/>
</dbReference>
<dbReference type="PDB" id="2NMZ">
    <property type="method" value="X-ray"/>
    <property type="resolution" value="0.97 A"/>
    <property type="chains" value="A/B=501-598"/>
</dbReference>
<dbReference type="PDB" id="2NNK">
    <property type="method" value="X-ray"/>
    <property type="resolution" value="1.25 A"/>
    <property type="chains" value="A/B=501-598"/>
</dbReference>
<dbReference type="PDB" id="2NNP">
    <property type="method" value="X-ray"/>
    <property type="resolution" value="1.20 A"/>
    <property type="chains" value="A/B=501-598"/>
</dbReference>
<dbReference type="PDB" id="2R38">
    <property type="method" value="X-ray"/>
    <property type="resolution" value="1.81 A"/>
    <property type="chains" value="A/B=501-599"/>
</dbReference>
<dbReference type="PDB" id="2R3T">
    <property type="method" value="X-ray"/>
    <property type="resolution" value="1.80 A"/>
    <property type="chains" value="A/B=501-599"/>
</dbReference>
<dbReference type="PDB" id="2R3W">
    <property type="method" value="X-ray"/>
    <property type="resolution" value="1.92 A"/>
    <property type="chains" value="A/B=501-599"/>
</dbReference>
<dbReference type="PDB" id="2Z54">
    <property type="method" value="X-ray"/>
    <property type="resolution" value="2.31 A"/>
    <property type="chains" value="A/B=501-599"/>
</dbReference>
<dbReference type="PDB" id="3B7V">
    <property type="method" value="X-ray"/>
    <property type="resolution" value="1.46 A"/>
    <property type="chains" value="A/B=501-599"/>
</dbReference>
<dbReference type="PDB" id="3B80">
    <property type="method" value="X-ray"/>
    <property type="resolution" value="1.50 A"/>
    <property type="chains" value="A/B=501-599"/>
</dbReference>
<dbReference type="PDB" id="3BC4">
    <property type="method" value="X-ray"/>
    <property type="resolution" value="1.82 A"/>
    <property type="chains" value="A=501-599"/>
</dbReference>
<dbReference type="PDB" id="3BGB">
    <property type="method" value="X-ray"/>
    <property type="resolution" value="1.90 A"/>
    <property type="chains" value="A/B=501-599"/>
</dbReference>
<dbReference type="PDB" id="3BGC">
    <property type="method" value="X-ray"/>
    <property type="resolution" value="1.80 A"/>
    <property type="chains" value="A/B=501-599"/>
</dbReference>
<dbReference type="PDB" id="3CYW">
    <property type="method" value="X-ray"/>
    <property type="resolution" value="1.40 A"/>
    <property type="chains" value="A/B=501-599"/>
</dbReference>
<dbReference type="PDB" id="3CYX">
    <property type="method" value="X-ray"/>
    <property type="resolution" value="1.20 A"/>
    <property type="chains" value="A/B=501-599"/>
</dbReference>
<dbReference type="PDB" id="3D1X">
    <property type="method" value="X-ray"/>
    <property type="resolution" value="1.05 A"/>
    <property type="chains" value="A/B=501-599"/>
</dbReference>
<dbReference type="PDB" id="3D1Y">
    <property type="method" value="X-ray"/>
    <property type="resolution" value="1.05 A"/>
    <property type="chains" value="A/B=501-599"/>
</dbReference>
<dbReference type="PDB" id="3D1Z">
    <property type="method" value="X-ray"/>
    <property type="resolution" value="1.30 A"/>
    <property type="chains" value="A/B=501-599"/>
</dbReference>
<dbReference type="PDB" id="3D20">
    <property type="method" value="X-ray"/>
    <property type="resolution" value="1.05 A"/>
    <property type="chains" value="A/B=501-599"/>
</dbReference>
<dbReference type="PDB" id="3OXC">
    <property type="method" value="X-ray"/>
    <property type="resolution" value="1.16 A"/>
    <property type="chains" value="A/B=501-598"/>
</dbReference>
<dbReference type="PDB" id="6B36">
    <property type="method" value="X-ray"/>
    <property type="resolution" value="1.63 A"/>
    <property type="chains" value="A/B=501-599"/>
</dbReference>
<dbReference type="PDB" id="6B38">
    <property type="method" value="X-ray"/>
    <property type="resolution" value="1.48 A"/>
    <property type="chains" value="A/B=501-599"/>
</dbReference>
<dbReference type="PDB" id="6B3C">
    <property type="method" value="X-ray"/>
    <property type="resolution" value="1.60 A"/>
    <property type="chains" value="A/B=501-599"/>
</dbReference>
<dbReference type="PDB" id="6B3F">
    <property type="method" value="X-ray"/>
    <property type="resolution" value="1.46 A"/>
    <property type="chains" value="A/B=501-599"/>
</dbReference>
<dbReference type="PDB" id="6B3G">
    <property type="method" value="X-ray"/>
    <property type="resolution" value="1.50 A"/>
    <property type="chains" value="A/B=501-599"/>
</dbReference>
<dbReference type="PDB" id="6B3H">
    <property type="method" value="X-ray"/>
    <property type="resolution" value="1.62 A"/>
    <property type="chains" value="A/B=501-599"/>
</dbReference>
<dbReference type="PDBsum" id="1BDL"/>
<dbReference type="PDBsum" id="1BDQ"/>
<dbReference type="PDBsum" id="1BDR"/>
<dbReference type="PDBsum" id="1FEJ"/>
<dbReference type="PDBsum" id="1FF0"/>
<dbReference type="PDBsum" id="1FFF"/>
<dbReference type="PDBsum" id="1FFI"/>
<dbReference type="PDBsum" id="1FG6"/>
<dbReference type="PDBsum" id="1FG8"/>
<dbReference type="PDBsum" id="1FGC"/>
<dbReference type="PDBsum" id="1G2K"/>
<dbReference type="PDBsum" id="1HPV"/>
<dbReference type="PDBsum" id="1HVJ"/>
<dbReference type="PDBsum" id="1HVS"/>
<dbReference type="PDBsum" id="1K1T"/>
<dbReference type="PDBsum" id="1K1U"/>
<dbReference type="PDBsum" id="1K2B"/>
<dbReference type="PDBsum" id="1K2C"/>
<dbReference type="PDBsum" id="1ODX"/>
<dbReference type="PDBsum" id="1Q9P"/>
<dbReference type="PDBsum" id="1TCX"/>
<dbReference type="PDBsum" id="1WJE"/>
<dbReference type="PDBsum" id="1WJF"/>
<dbReference type="PDBsum" id="2AOC"/>
<dbReference type="PDBsum" id="2AOD"/>
<dbReference type="PDBsum" id="2AOE"/>
<dbReference type="PDBsum" id="2AOF"/>
<dbReference type="PDBsum" id="2AOG"/>
<dbReference type="PDBsum" id="2AOH"/>
<dbReference type="PDBsum" id="2AOI"/>
<dbReference type="PDBsum" id="2AOJ"/>
<dbReference type="PDBsum" id="2AVM"/>
<dbReference type="PDBsum" id="2AVO"/>
<dbReference type="PDBsum" id="2AVQ"/>
<dbReference type="PDBsum" id="2AVS"/>
<dbReference type="PDBsum" id="2AVV"/>
<dbReference type="PDBsum" id="2BPV"/>
<dbReference type="PDBsum" id="2BPW"/>
<dbReference type="PDBsum" id="2BPX"/>
<dbReference type="PDBsum" id="2BPY"/>
<dbReference type="PDBsum" id="2BPZ"/>
<dbReference type="PDBsum" id="2F80"/>
<dbReference type="PDBsum" id="2F81"/>
<dbReference type="PDBsum" id="2F8G"/>
<dbReference type="PDBsum" id="2NMY"/>
<dbReference type="PDBsum" id="2NMZ"/>
<dbReference type="PDBsum" id="2NNK"/>
<dbReference type="PDBsum" id="2NNP"/>
<dbReference type="PDBsum" id="2R38"/>
<dbReference type="PDBsum" id="2R3T"/>
<dbReference type="PDBsum" id="2R3W"/>
<dbReference type="PDBsum" id="2Z54"/>
<dbReference type="PDBsum" id="3B7V"/>
<dbReference type="PDBsum" id="3B80"/>
<dbReference type="PDBsum" id="3BC4"/>
<dbReference type="PDBsum" id="3BGB"/>
<dbReference type="PDBsum" id="3BGC"/>
<dbReference type="PDBsum" id="3CYW"/>
<dbReference type="PDBsum" id="3CYX"/>
<dbReference type="PDBsum" id="3D1X"/>
<dbReference type="PDBsum" id="3D1Y"/>
<dbReference type="PDBsum" id="3D1Z"/>
<dbReference type="PDBsum" id="3D20"/>
<dbReference type="PDBsum" id="3OXC"/>
<dbReference type="PDBsum" id="6B36"/>
<dbReference type="PDBsum" id="6B38"/>
<dbReference type="PDBsum" id="6B3C"/>
<dbReference type="PDBsum" id="6B3F"/>
<dbReference type="PDBsum" id="6B3G"/>
<dbReference type="PDBsum" id="6B3H"/>
<dbReference type="BMRB" id="P04587"/>
<dbReference type="SMR" id="P04587"/>
<dbReference type="DrugBank" id="DB07910">
    <property type="generic name" value="(2S)-2-amino-3-phenylpropane-1,1-diol"/>
</dbReference>
<dbReference type="DrugBank" id="DB08115">
    <property type="generic name" value="2-aminoethyl naphthalen-1-ylacetate"/>
</dbReference>
<dbReference type="MEROPS" id="A02.001"/>
<dbReference type="ABCD" id="P04587">
    <property type="antibodies" value="2 sequenced antibodies"/>
</dbReference>
<dbReference type="EvolutionaryTrace" id="P04587"/>
<dbReference type="PRO" id="PR:P04587"/>
<dbReference type="GO" id="GO:0043657">
    <property type="term" value="C:host cell"/>
    <property type="evidence" value="ECO:0007669"/>
    <property type="project" value="GOC"/>
</dbReference>
<dbReference type="GO" id="GO:0042025">
    <property type="term" value="C:host cell nucleus"/>
    <property type="evidence" value="ECO:0007669"/>
    <property type="project" value="UniProtKB-SubCell"/>
</dbReference>
<dbReference type="GO" id="GO:0020002">
    <property type="term" value="C:host cell plasma membrane"/>
    <property type="evidence" value="ECO:0007669"/>
    <property type="project" value="UniProtKB-SubCell"/>
</dbReference>
<dbReference type="GO" id="GO:0072494">
    <property type="term" value="C:host multivesicular body"/>
    <property type="evidence" value="ECO:0007669"/>
    <property type="project" value="UniProtKB-SubCell"/>
</dbReference>
<dbReference type="GO" id="GO:0016020">
    <property type="term" value="C:membrane"/>
    <property type="evidence" value="ECO:0007669"/>
    <property type="project" value="UniProtKB-KW"/>
</dbReference>
<dbReference type="GO" id="GO:0019013">
    <property type="term" value="C:viral nucleocapsid"/>
    <property type="evidence" value="ECO:0007669"/>
    <property type="project" value="UniProtKB-KW"/>
</dbReference>
<dbReference type="GO" id="GO:0055036">
    <property type="term" value="C:virion membrane"/>
    <property type="evidence" value="ECO:0007669"/>
    <property type="project" value="UniProtKB-SubCell"/>
</dbReference>
<dbReference type="GO" id="GO:0004190">
    <property type="term" value="F:aspartic-type endopeptidase activity"/>
    <property type="evidence" value="ECO:0007669"/>
    <property type="project" value="UniProtKB-KW"/>
</dbReference>
<dbReference type="GO" id="GO:0003677">
    <property type="term" value="F:DNA binding"/>
    <property type="evidence" value="ECO:0007669"/>
    <property type="project" value="UniProtKB-KW"/>
</dbReference>
<dbReference type="GO" id="GO:0003887">
    <property type="term" value="F:DNA-directed DNA polymerase activity"/>
    <property type="evidence" value="ECO:0007669"/>
    <property type="project" value="UniProtKB-KW"/>
</dbReference>
<dbReference type="GO" id="GO:0004533">
    <property type="term" value="F:exoribonuclease H activity"/>
    <property type="evidence" value="ECO:0007669"/>
    <property type="project" value="UniProtKB-EC"/>
</dbReference>
<dbReference type="GO" id="GO:0008289">
    <property type="term" value="F:lipid binding"/>
    <property type="evidence" value="ECO:0007669"/>
    <property type="project" value="UniProtKB-KW"/>
</dbReference>
<dbReference type="GO" id="GO:0035613">
    <property type="term" value="F:RNA stem-loop binding"/>
    <property type="evidence" value="ECO:0007669"/>
    <property type="project" value="TreeGrafter"/>
</dbReference>
<dbReference type="GO" id="GO:0003964">
    <property type="term" value="F:RNA-directed DNA polymerase activity"/>
    <property type="evidence" value="ECO:0007669"/>
    <property type="project" value="UniProtKB-KW"/>
</dbReference>
<dbReference type="GO" id="GO:0004523">
    <property type="term" value="F:RNA-DNA hybrid ribonuclease activity"/>
    <property type="evidence" value="ECO:0007669"/>
    <property type="project" value="InterPro"/>
</dbReference>
<dbReference type="GO" id="GO:0005198">
    <property type="term" value="F:structural molecule activity"/>
    <property type="evidence" value="ECO:0007669"/>
    <property type="project" value="InterPro"/>
</dbReference>
<dbReference type="GO" id="GO:0008270">
    <property type="term" value="F:zinc ion binding"/>
    <property type="evidence" value="ECO:0007669"/>
    <property type="project" value="UniProtKB-KW"/>
</dbReference>
<dbReference type="GO" id="GO:0015074">
    <property type="term" value="P:DNA integration"/>
    <property type="evidence" value="ECO:0007669"/>
    <property type="project" value="UniProtKB-KW"/>
</dbReference>
<dbReference type="GO" id="GO:0006310">
    <property type="term" value="P:DNA recombination"/>
    <property type="evidence" value="ECO:0007669"/>
    <property type="project" value="UniProtKB-KW"/>
</dbReference>
<dbReference type="GO" id="GO:0075713">
    <property type="term" value="P:establishment of integrated proviral latency"/>
    <property type="evidence" value="ECO:0007669"/>
    <property type="project" value="UniProtKB-KW"/>
</dbReference>
<dbReference type="GO" id="GO:0006508">
    <property type="term" value="P:proteolysis"/>
    <property type="evidence" value="ECO:0007669"/>
    <property type="project" value="UniProtKB-KW"/>
</dbReference>
<dbReference type="GO" id="GO:0046718">
    <property type="term" value="P:symbiont entry into host cell"/>
    <property type="evidence" value="ECO:0007669"/>
    <property type="project" value="UniProtKB-KW"/>
</dbReference>
<dbReference type="GO" id="GO:0052151">
    <property type="term" value="P:symbiont-mediated activation of host apoptosis"/>
    <property type="evidence" value="ECO:0007669"/>
    <property type="project" value="UniProtKB-KW"/>
</dbReference>
<dbReference type="GO" id="GO:0039657">
    <property type="term" value="P:symbiont-mediated suppression of host gene expression"/>
    <property type="evidence" value="ECO:0007669"/>
    <property type="project" value="UniProtKB-KW"/>
</dbReference>
<dbReference type="GO" id="GO:0044826">
    <property type="term" value="P:viral genome integration into host DNA"/>
    <property type="evidence" value="ECO:0007669"/>
    <property type="project" value="UniProtKB-KW"/>
</dbReference>
<dbReference type="GO" id="GO:0075732">
    <property type="term" value="P:viral penetration into host nucleus"/>
    <property type="evidence" value="ECO:0007669"/>
    <property type="project" value="UniProtKB-KW"/>
</dbReference>
<dbReference type="GO" id="GO:0075523">
    <property type="term" value="P:viral translational frameshifting"/>
    <property type="evidence" value="ECO:0007669"/>
    <property type="project" value="UniProtKB-KW"/>
</dbReference>
<dbReference type="CDD" id="cd05482">
    <property type="entry name" value="HIV_retropepsin_like"/>
    <property type="match status" value="1"/>
</dbReference>
<dbReference type="CDD" id="cd01645">
    <property type="entry name" value="RT_Rtv"/>
    <property type="match status" value="1"/>
</dbReference>
<dbReference type="FunFam" id="1.10.1200.30:FF:000001">
    <property type="entry name" value="Gag polyprotein"/>
    <property type="match status" value="1"/>
</dbReference>
<dbReference type="FunFam" id="1.10.150.90:FF:000001">
    <property type="entry name" value="Gag polyprotein"/>
    <property type="match status" value="1"/>
</dbReference>
<dbReference type="FunFam" id="1.10.375.10:FF:000001">
    <property type="entry name" value="Gag polyprotein"/>
    <property type="match status" value="1"/>
</dbReference>
<dbReference type="FunFam" id="1.20.5.760:FF:000001">
    <property type="entry name" value="Gag polyprotein"/>
    <property type="match status" value="1"/>
</dbReference>
<dbReference type="FunFam" id="4.10.60.10:FF:000001">
    <property type="entry name" value="Gag polyprotein"/>
    <property type="match status" value="1"/>
</dbReference>
<dbReference type="FunFam" id="2.40.70.10:FF:000001">
    <property type="entry name" value="Gag-Pol polyprotein"/>
    <property type="match status" value="1"/>
</dbReference>
<dbReference type="FunFam" id="3.30.420.10:FF:000025">
    <property type="entry name" value="Gag-Pol polyprotein"/>
    <property type="match status" value="1"/>
</dbReference>
<dbReference type="FunFam" id="2.30.30.10:FF:000001">
    <property type="entry name" value="POL polyprotein"/>
    <property type="match status" value="1"/>
</dbReference>
<dbReference type="FunFam" id="3.30.420.10:FF:000017">
    <property type="entry name" value="POL polyprotein"/>
    <property type="match status" value="1"/>
</dbReference>
<dbReference type="FunFam" id="3.30.70.270:FF:000016">
    <property type="entry name" value="POL polyprotein"/>
    <property type="match status" value="1"/>
</dbReference>
<dbReference type="Gene3D" id="1.10.10.200">
    <property type="match status" value="1"/>
</dbReference>
<dbReference type="Gene3D" id="1.10.1200.30">
    <property type="match status" value="1"/>
</dbReference>
<dbReference type="Gene3D" id="3.30.70.270">
    <property type="match status" value="3"/>
</dbReference>
<dbReference type="Gene3D" id="2.40.70.10">
    <property type="entry name" value="Acid Proteases"/>
    <property type="match status" value="1"/>
</dbReference>
<dbReference type="Gene3D" id="3.10.10.10">
    <property type="entry name" value="HIV Type 1 Reverse Transcriptase, subunit A, domain 1"/>
    <property type="match status" value="1"/>
</dbReference>
<dbReference type="Gene3D" id="1.10.375.10">
    <property type="entry name" value="Human Immunodeficiency Virus Type 1 Capsid Protein"/>
    <property type="match status" value="1"/>
</dbReference>
<dbReference type="Gene3D" id="1.10.150.90">
    <property type="entry name" value="Immunodeficiency lentiviruses, gag gene matrix protein p17"/>
    <property type="match status" value="1"/>
</dbReference>
<dbReference type="Gene3D" id="2.30.30.10">
    <property type="entry name" value="Integrase, C-terminal domain superfamily, retroviral"/>
    <property type="match status" value="1"/>
</dbReference>
<dbReference type="Gene3D" id="3.30.420.10">
    <property type="entry name" value="Ribonuclease H-like superfamily/Ribonuclease H"/>
    <property type="match status" value="2"/>
</dbReference>
<dbReference type="Gene3D" id="1.20.5.760">
    <property type="entry name" value="Single helix bin"/>
    <property type="match status" value="1"/>
</dbReference>
<dbReference type="Gene3D" id="4.10.60.10">
    <property type="entry name" value="Zinc finger, CCHC-type"/>
    <property type="match status" value="1"/>
</dbReference>
<dbReference type="InterPro" id="IPR001969">
    <property type="entry name" value="Aspartic_peptidase_AS"/>
</dbReference>
<dbReference type="InterPro" id="IPR043502">
    <property type="entry name" value="DNA/RNA_pol_sf"/>
</dbReference>
<dbReference type="InterPro" id="IPR045345">
    <property type="entry name" value="Gag_p24_C"/>
</dbReference>
<dbReference type="InterPro" id="IPR017856">
    <property type="entry name" value="Integrase-like_N"/>
</dbReference>
<dbReference type="InterPro" id="IPR036862">
    <property type="entry name" value="Integrase_C_dom_sf_retrovir"/>
</dbReference>
<dbReference type="InterPro" id="IPR001037">
    <property type="entry name" value="Integrase_C_retrovir"/>
</dbReference>
<dbReference type="InterPro" id="IPR001584">
    <property type="entry name" value="Integrase_cat-core"/>
</dbReference>
<dbReference type="InterPro" id="IPR003308">
    <property type="entry name" value="Integrase_Zn-bd_dom_N"/>
</dbReference>
<dbReference type="InterPro" id="IPR000071">
    <property type="entry name" value="Lentvrl_matrix_N"/>
</dbReference>
<dbReference type="InterPro" id="IPR012344">
    <property type="entry name" value="Matrix_HIV/RSV_N"/>
</dbReference>
<dbReference type="InterPro" id="IPR001995">
    <property type="entry name" value="Peptidase_A2_cat"/>
</dbReference>
<dbReference type="InterPro" id="IPR021109">
    <property type="entry name" value="Peptidase_aspartic_dom_sf"/>
</dbReference>
<dbReference type="InterPro" id="IPR034170">
    <property type="entry name" value="Retropepsin-like_cat_dom"/>
</dbReference>
<dbReference type="InterPro" id="IPR018061">
    <property type="entry name" value="Retropepsins"/>
</dbReference>
<dbReference type="InterPro" id="IPR008916">
    <property type="entry name" value="Retrov_capsid_C"/>
</dbReference>
<dbReference type="InterPro" id="IPR008919">
    <property type="entry name" value="Retrov_capsid_N"/>
</dbReference>
<dbReference type="InterPro" id="IPR010999">
    <property type="entry name" value="Retrovr_matrix"/>
</dbReference>
<dbReference type="InterPro" id="IPR043128">
    <property type="entry name" value="Rev_trsase/Diguanyl_cyclase"/>
</dbReference>
<dbReference type="InterPro" id="IPR012337">
    <property type="entry name" value="RNaseH-like_sf"/>
</dbReference>
<dbReference type="InterPro" id="IPR002156">
    <property type="entry name" value="RNaseH_domain"/>
</dbReference>
<dbReference type="InterPro" id="IPR036397">
    <property type="entry name" value="RNaseH_sf"/>
</dbReference>
<dbReference type="InterPro" id="IPR000477">
    <property type="entry name" value="RT_dom"/>
</dbReference>
<dbReference type="InterPro" id="IPR010659">
    <property type="entry name" value="RVT_connect"/>
</dbReference>
<dbReference type="InterPro" id="IPR010661">
    <property type="entry name" value="RVT_thumb"/>
</dbReference>
<dbReference type="InterPro" id="IPR001878">
    <property type="entry name" value="Znf_CCHC"/>
</dbReference>
<dbReference type="InterPro" id="IPR036875">
    <property type="entry name" value="Znf_CCHC_sf"/>
</dbReference>
<dbReference type="PANTHER" id="PTHR41694">
    <property type="entry name" value="ENDOGENOUS RETROVIRUS GROUP K MEMBER POL PROTEIN"/>
    <property type="match status" value="1"/>
</dbReference>
<dbReference type="PANTHER" id="PTHR41694:SF3">
    <property type="entry name" value="RNA-DIRECTED DNA POLYMERASE-RELATED"/>
    <property type="match status" value="1"/>
</dbReference>
<dbReference type="Pfam" id="PF00540">
    <property type="entry name" value="Gag_p17"/>
    <property type="match status" value="1"/>
</dbReference>
<dbReference type="Pfam" id="PF19317">
    <property type="entry name" value="Gag_p24_C"/>
    <property type="match status" value="1"/>
</dbReference>
<dbReference type="Pfam" id="PF00552">
    <property type="entry name" value="IN_DBD_C"/>
    <property type="match status" value="1"/>
</dbReference>
<dbReference type="Pfam" id="PF02022">
    <property type="entry name" value="Integrase_Zn"/>
    <property type="match status" value="1"/>
</dbReference>
<dbReference type="Pfam" id="PF00075">
    <property type="entry name" value="RNase_H"/>
    <property type="match status" value="1"/>
</dbReference>
<dbReference type="Pfam" id="PF00665">
    <property type="entry name" value="rve"/>
    <property type="match status" value="1"/>
</dbReference>
<dbReference type="Pfam" id="PF00077">
    <property type="entry name" value="RVP"/>
    <property type="match status" value="1"/>
</dbReference>
<dbReference type="Pfam" id="PF00078">
    <property type="entry name" value="RVT_1"/>
    <property type="match status" value="1"/>
</dbReference>
<dbReference type="Pfam" id="PF06815">
    <property type="entry name" value="RVT_connect"/>
    <property type="match status" value="1"/>
</dbReference>
<dbReference type="Pfam" id="PF06817">
    <property type="entry name" value="RVT_thumb"/>
    <property type="match status" value="1"/>
</dbReference>
<dbReference type="Pfam" id="PF00098">
    <property type="entry name" value="zf-CCHC"/>
    <property type="match status" value="2"/>
</dbReference>
<dbReference type="PRINTS" id="PR00234">
    <property type="entry name" value="HIV1MATRIX"/>
</dbReference>
<dbReference type="SMART" id="SM00343">
    <property type="entry name" value="ZnF_C2HC"/>
    <property type="match status" value="2"/>
</dbReference>
<dbReference type="SUPFAM" id="SSF50630">
    <property type="entry name" value="Acid proteases"/>
    <property type="match status" value="1"/>
</dbReference>
<dbReference type="SUPFAM" id="SSF50122">
    <property type="entry name" value="DNA-binding domain of retroviral integrase"/>
    <property type="match status" value="1"/>
</dbReference>
<dbReference type="SUPFAM" id="SSF56672">
    <property type="entry name" value="DNA/RNA polymerases"/>
    <property type="match status" value="1"/>
</dbReference>
<dbReference type="SUPFAM" id="SSF46919">
    <property type="entry name" value="N-terminal Zn binding domain of HIV integrase"/>
    <property type="match status" value="1"/>
</dbReference>
<dbReference type="SUPFAM" id="SSF47836">
    <property type="entry name" value="Retroviral matrix proteins"/>
    <property type="match status" value="1"/>
</dbReference>
<dbReference type="SUPFAM" id="SSF47353">
    <property type="entry name" value="Retrovirus capsid dimerization domain-like"/>
    <property type="match status" value="1"/>
</dbReference>
<dbReference type="SUPFAM" id="SSF47943">
    <property type="entry name" value="Retrovirus capsid protein, N-terminal core domain"/>
    <property type="match status" value="1"/>
</dbReference>
<dbReference type="SUPFAM" id="SSF57756">
    <property type="entry name" value="Retrovirus zinc finger-like domains"/>
    <property type="match status" value="1"/>
</dbReference>
<dbReference type="SUPFAM" id="SSF53098">
    <property type="entry name" value="Ribonuclease H-like"/>
    <property type="match status" value="2"/>
</dbReference>
<dbReference type="PROSITE" id="PS50175">
    <property type="entry name" value="ASP_PROT_RETROV"/>
    <property type="match status" value="1"/>
</dbReference>
<dbReference type="PROSITE" id="PS00141">
    <property type="entry name" value="ASP_PROTEASE"/>
    <property type="match status" value="1"/>
</dbReference>
<dbReference type="PROSITE" id="PS50994">
    <property type="entry name" value="INTEGRASE"/>
    <property type="match status" value="1"/>
</dbReference>
<dbReference type="PROSITE" id="PS51027">
    <property type="entry name" value="INTEGRASE_DBD"/>
    <property type="match status" value="1"/>
</dbReference>
<dbReference type="PROSITE" id="PS50879">
    <property type="entry name" value="RNASE_H_1"/>
    <property type="match status" value="1"/>
</dbReference>
<dbReference type="PROSITE" id="PS50878">
    <property type="entry name" value="RT_POL"/>
    <property type="match status" value="1"/>
</dbReference>
<dbReference type="PROSITE" id="PS50158">
    <property type="entry name" value="ZF_CCHC"/>
    <property type="match status" value="2"/>
</dbReference>
<dbReference type="PROSITE" id="PS50876">
    <property type="entry name" value="ZF_INTEGRASE"/>
    <property type="match status" value="1"/>
</dbReference>
<evidence type="ECO:0000250" key="1"/>
<evidence type="ECO:0000250" key="2">
    <source>
        <dbReference type="UniProtKB" id="P03347"/>
    </source>
</evidence>
<evidence type="ECO:0000250" key="3">
    <source>
        <dbReference type="UniProtKB" id="P03366"/>
    </source>
</evidence>
<evidence type="ECO:0000250" key="4">
    <source>
        <dbReference type="UniProtKB" id="P03367"/>
    </source>
</evidence>
<evidence type="ECO:0000250" key="5">
    <source>
        <dbReference type="UniProtKB" id="P04585"/>
    </source>
</evidence>
<evidence type="ECO:0000250" key="6">
    <source>
        <dbReference type="UniProtKB" id="P12493"/>
    </source>
</evidence>
<evidence type="ECO:0000250" key="7">
    <source>
        <dbReference type="UniProtKB" id="P12497"/>
    </source>
</evidence>
<evidence type="ECO:0000255" key="8"/>
<evidence type="ECO:0000255" key="9">
    <source>
        <dbReference type="PROSITE-ProRule" id="PRU00047"/>
    </source>
</evidence>
<evidence type="ECO:0000255" key="10">
    <source>
        <dbReference type="PROSITE-ProRule" id="PRU00275"/>
    </source>
</evidence>
<evidence type="ECO:0000255" key="11">
    <source>
        <dbReference type="PROSITE-ProRule" id="PRU00405"/>
    </source>
</evidence>
<evidence type="ECO:0000255" key="12">
    <source>
        <dbReference type="PROSITE-ProRule" id="PRU00408"/>
    </source>
</evidence>
<evidence type="ECO:0000255" key="13">
    <source>
        <dbReference type="PROSITE-ProRule" id="PRU00450"/>
    </source>
</evidence>
<evidence type="ECO:0000255" key="14">
    <source>
        <dbReference type="PROSITE-ProRule" id="PRU00457"/>
    </source>
</evidence>
<evidence type="ECO:0000255" key="15">
    <source>
        <dbReference type="PROSITE-ProRule" id="PRU00506"/>
    </source>
</evidence>
<evidence type="ECO:0000255" key="16">
    <source>
        <dbReference type="PROSITE-ProRule" id="PRU10094"/>
    </source>
</evidence>
<evidence type="ECO:0000256" key="17">
    <source>
        <dbReference type="SAM" id="MobiDB-lite"/>
    </source>
</evidence>
<evidence type="ECO:0000305" key="18"/>
<evidence type="ECO:0007829" key="19">
    <source>
        <dbReference type="PDB" id="1BDQ"/>
    </source>
</evidence>
<evidence type="ECO:0007829" key="20">
    <source>
        <dbReference type="PDB" id="1K2B"/>
    </source>
</evidence>
<evidence type="ECO:0007829" key="21">
    <source>
        <dbReference type="PDB" id="1WJE"/>
    </source>
</evidence>
<evidence type="ECO:0007829" key="22">
    <source>
        <dbReference type="PDB" id="1WJF"/>
    </source>
</evidence>
<evidence type="ECO:0007829" key="23">
    <source>
        <dbReference type="PDB" id="2AVS"/>
    </source>
</evidence>
<evidence type="ECO:0007829" key="24">
    <source>
        <dbReference type="PDB" id="3D1X"/>
    </source>
</evidence>
<proteinExistence type="evidence at protein level"/>
<sequence>MGARASVLSGGELDRWEKIRLRPGGKKKYKLKHIVWASRELERFAVNPGLLETSEGCRQILGQLQPSLQTGSEELRSLYNTVATLYCVHQRIEIKDTKEALDKIEEEQNKSKKKAQQAAADTGHSSQVSQNYPIVQNIQGQMVHQAISPRTLNAWVKVVEEKAFSPEVIPMFSALSEGATPQDLNTMLNTVGGHQAAMQMLKETINEEAAEWDRVHPVHAGPIAPGQMREPRGSDIAGTTSTLQEQIGWMTNNPPIPVGEIYKRWIILGLNKIVRMYSPTSILDIRQGPKEPFRDYVDRFYKTLRAEQASQEVKNWMTETLLVQNANPDCKTILKALGPAATLEEMMTACQGVGGPGHKARVLAEAMSQVTNSTTIMMQRGNFRNQRKIVKCFNCGKEGHIARNCKAPRKKGCWKCGKEGHQMKDCTERQANFLREDLAFLQGKAREFSSEQTRANSPTISSEQTRANSPTRRELQVWGRDNNSPSEAGADRQGTVSFNFPQITLWQRPLVTIKIGGQLKEALLDTGADDTVLEEMSLPGRWKPKMIGGIGGFIKVRQYDQILIEICGHKAIGTVLVGPTPVNIIGRNLLTQIGCTLNFPISPIETVPVKLKPGMDGPKVKQWPLTEEKIKALVEICTEMEKEGKISKIGPENPYNTPVFAIKKKDSTKWRKLVDFRELNRRTQDFWEVQLGIPHPAGLKKKKSVTVLDVGDAYFSVPLDEDFRKYTAFTIPSINNETPGSGYQYNVLPQGWKGSPAIFQSSMTKILEPFRKQNPDIVIYQYMDDLYVGSDLEIGQHRTKIEELRQHLLRWGFTTPDKKHQKEPPFLWMGYELHPDKWTIQPIVLPEKDSWTVNDIQKLVGKLNWASQIYPGIKVRQLCKLLRGTKALTEVIPLTEEAELELAENREILKEPVHGVYYDPSKDLIAEIQKQGQGQWTYQIYQEPFKNLKTGKYARMRGAHTNDVKQLTEAVQKITTESIVIWGKTPKFKLPIQKETWETWWTEYWQATWIPEWEFVNTPPLVKLWYQLEKEPIVGAETFYVDGAASRETKLGKAGYVTNRGRQKVVTLTHTTNQKTELQAIHLALQDSGLEVNIVTDSQYALGIIQAQPDKSESELVNQIIEQLIKKEKVYLAWVPAHKGIGGNEQVDKLVSAGIRKILFLDGIDKAQEEHEKYHSNWRAMASDFNLPPVVAKEIVASCDKCQLKGEAMHGQVDCSPGIWQLDCTHLEGKVILVAVHVASGYIEAEVIPAETGQETAYFLLKLAGRWPVKTIHTDNGSNFTSATVKAACWWAGIKQEFGIPYNPQSQGVVESMNKELKKIIGQVRDQAEHLKTAVQMAVFIHNFKRKGGIGGYSAGERIVDIIATDIQTKELQKQITKIQNFRVYYRDSRNPLWKGPAKLLWKGEGAVVIQDNSDIKVVPRRKAKIIRDYGKQMAGDDCVASRQDED</sequence>
<organism>
    <name type="scientific">Human immunodeficiency virus type 1 group M subtype B (isolate BH5)</name>
    <name type="common">HIV-1</name>
    <dbReference type="NCBI Taxonomy" id="11682"/>
    <lineage>
        <taxon>Viruses</taxon>
        <taxon>Riboviria</taxon>
        <taxon>Pararnavirae</taxon>
        <taxon>Artverviricota</taxon>
        <taxon>Revtraviricetes</taxon>
        <taxon>Ortervirales</taxon>
        <taxon>Retroviridae</taxon>
        <taxon>Orthoretrovirinae</taxon>
        <taxon>Lentivirus</taxon>
        <taxon>Human immunodeficiency virus type 1</taxon>
    </lineage>
</organism>